<name>INVA_SALTY</name>
<protein>
    <recommendedName>
        <fullName>Invasion protein InvA</fullName>
    </recommendedName>
</protein>
<keyword id="KW-0002">3D-structure</keyword>
<keyword id="KW-0997">Cell inner membrane</keyword>
<keyword id="KW-1003">Cell membrane</keyword>
<keyword id="KW-0472">Membrane</keyword>
<keyword id="KW-0653">Protein transport</keyword>
<keyword id="KW-1185">Reference proteome</keyword>
<keyword id="KW-0812">Transmembrane</keyword>
<keyword id="KW-1133">Transmembrane helix</keyword>
<keyword id="KW-0813">Transport</keyword>
<keyword id="KW-0843">Virulence</keyword>
<dbReference type="EMBL" id="M90846">
    <property type="protein sequence ID" value="AAA16867.1"/>
    <property type="molecule type" value="Unassigned_DNA"/>
</dbReference>
<dbReference type="EMBL" id="AE006468">
    <property type="protein sequence ID" value="AAL21776.1"/>
    <property type="molecule type" value="Genomic_DNA"/>
</dbReference>
<dbReference type="EMBL" id="U43237">
    <property type="protein sequence ID" value="AAC45021.1"/>
    <property type="molecule type" value="Genomic_DNA"/>
</dbReference>
<dbReference type="EMBL" id="U43238">
    <property type="protein sequence ID" value="AAC45022.1"/>
    <property type="molecule type" value="Genomic_DNA"/>
</dbReference>
<dbReference type="EMBL" id="U43239">
    <property type="protein sequence ID" value="AAC45023.1"/>
    <property type="molecule type" value="Genomic_DNA"/>
</dbReference>
<dbReference type="EMBL" id="U43243">
    <property type="protein sequence ID" value="AAC45027.1"/>
    <property type="molecule type" value="Genomic_DNA"/>
</dbReference>
<dbReference type="EMBL" id="U43244">
    <property type="protein sequence ID" value="AAC45028.1"/>
    <property type="molecule type" value="Genomic_DNA"/>
</dbReference>
<dbReference type="EMBL" id="U43245">
    <property type="protein sequence ID" value="AAC45029.1"/>
    <property type="molecule type" value="Genomic_DNA"/>
</dbReference>
<dbReference type="EMBL" id="U43246">
    <property type="protein sequence ID" value="AAC45030.1"/>
    <property type="molecule type" value="Genomic_DNA"/>
</dbReference>
<dbReference type="EMBL" id="U43247">
    <property type="protein sequence ID" value="AAC45031.1"/>
    <property type="molecule type" value="Genomic_DNA"/>
</dbReference>
<dbReference type="EMBL" id="U43248">
    <property type="protein sequence ID" value="AAC45032.1"/>
    <property type="molecule type" value="Genomic_DNA"/>
</dbReference>
<dbReference type="PIR" id="A42888">
    <property type="entry name" value="A42888"/>
</dbReference>
<dbReference type="RefSeq" id="NP_461817.1">
    <property type="nucleotide sequence ID" value="NC_003197.2"/>
</dbReference>
<dbReference type="RefSeq" id="WP_000927219.1">
    <property type="nucleotide sequence ID" value="NC_003197.2"/>
</dbReference>
<dbReference type="PDB" id="2X49">
    <property type="method" value="X-ray"/>
    <property type="resolution" value="1.50 A"/>
    <property type="chains" value="A=357-685"/>
</dbReference>
<dbReference type="PDB" id="2X4A">
    <property type="method" value="X-ray"/>
    <property type="resolution" value="2.54 A"/>
    <property type="chains" value="A=357-685"/>
</dbReference>
<dbReference type="PDB" id="3LW9">
    <property type="method" value="X-ray"/>
    <property type="resolution" value="1.85 A"/>
    <property type="chains" value="A/B=358-525"/>
</dbReference>
<dbReference type="PDBsum" id="2X49"/>
<dbReference type="PDBsum" id="2X4A"/>
<dbReference type="PDBsum" id="3LW9"/>
<dbReference type="SMR" id="P0A1I3"/>
<dbReference type="DIP" id="DIP-59553N"/>
<dbReference type="IntAct" id="P0A1I3">
    <property type="interactions" value="9"/>
</dbReference>
<dbReference type="STRING" id="99287.STM2896"/>
<dbReference type="PaxDb" id="99287-STM2896"/>
<dbReference type="GeneID" id="1254419"/>
<dbReference type="KEGG" id="stm:STM2896"/>
<dbReference type="PATRIC" id="fig|99287.12.peg.3052"/>
<dbReference type="HOGENOM" id="CLU_015346_3_0_6"/>
<dbReference type="OMA" id="MGSFYIE"/>
<dbReference type="PhylomeDB" id="P0A1I3"/>
<dbReference type="BioCyc" id="SENT99287:STM2896-MONOMER"/>
<dbReference type="EvolutionaryTrace" id="P0A1I3"/>
<dbReference type="PHI-base" id="PHI:11302"/>
<dbReference type="PHI-base" id="PHI:6464"/>
<dbReference type="PHI-base" id="PHI:6588"/>
<dbReference type="Proteomes" id="UP000001014">
    <property type="component" value="Chromosome"/>
</dbReference>
<dbReference type="GO" id="GO:0005886">
    <property type="term" value="C:plasma membrane"/>
    <property type="evidence" value="ECO:0000318"/>
    <property type="project" value="GO_Central"/>
</dbReference>
<dbReference type="GO" id="GO:0009306">
    <property type="term" value="P:protein secretion"/>
    <property type="evidence" value="ECO:0007669"/>
    <property type="project" value="InterPro"/>
</dbReference>
<dbReference type="Gene3D" id="3.40.30.60">
    <property type="entry name" value="FHIPEP family, domain 1"/>
    <property type="match status" value="1"/>
</dbReference>
<dbReference type="Gene3D" id="3.40.5.40">
    <property type="entry name" value="FHIPEP family, domain 2"/>
    <property type="match status" value="1"/>
</dbReference>
<dbReference type="Gene3D" id="1.10.8.540">
    <property type="entry name" value="FHIPEP family, domain 3"/>
    <property type="match status" value="1"/>
</dbReference>
<dbReference type="Gene3D" id="3.40.50.12790">
    <property type="entry name" value="FHIPEP family, domain 4"/>
    <property type="match status" value="1"/>
</dbReference>
<dbReference type="InterPro" id="IPR042194">
    <property type="entry name" value="FHIPEP_1"/>
</dbReference>
<dbReference type="InterPro" id="IPR042193">
    <property type="entry name" value="FHIPEP_3"/>
</dbReference>
<dbReference type="InterPro" id="IPR042196">
    <property type="entry name" value="FHIPEP_4"/>
</dbReference>
<dbReference type="InterPro" id="IPR025505">
    <property type="entry name" value="FHIPEP_CS"/>
</dbReference>
<dbReference type="InterPro" id="IPR001712">
    <property type="entry name" value="T3SS_FHIPEP"/>
</dbReference>
<dbReference type="InterPro" id="IPR006302">
    <property type="entry name" value="T3SS_HrcV"/>
</dbReference>
<dbReference type="NCBIfam" id="TIGR01399">
    <property type="entry name" value="hrcV"/>
    <property type="match status" value="1"/>
</dbReference>
<dbReference type="NCBIfam" id="NF011865">
    <property type="entry name" value="PRK15337.1"/>
    <property type="match status" value="1"/>
</dbReference>
<dbReference type="PANTHER" id="PTHR30161">
    <property type="entry name" value="FLAGELLAR EXPORT PROTEIN, MEMBRANE FLHA SUBUNIT-RELATED"/>
    <property type="match status" value="1"/>
</dbReference>
<dbReference type="PANTHER" id="PTHR30161:SF2">
    <property type="entry name" value="INVASION PROTEIN INVA"/>
    <property type="match status" value="1"/>
</dbReference>
<dbReference type="Pfam" id="PF00771">
    <property type="entry name" value="FHIPEP"/>
    <property type="match status" value="1"/>
</dbReference>
<dbReference type="PIRSF" id="PIRSF005419">
    <property type="entry name" value="FlhA"/>
    <property type="match status" value="1"/>
</dbReference>
<dbReference type="PRINTS" id="PR00949">
    <property type="entry name" value="TYPE3IMAPROT"/>
</dbReference>
<dbReference type="PROSITE" id="PS00994">
    <property type="entry name" value="FHIPEP"/>
    <property type="match status" value="1"/>
</dbReference>
<organism>
    <name type="scientific">Salmonella typhimurium (strain LT2 / SGSC1412 / ATCC 700720)</name>
    <dbReference type="NCBI Taxonomy" id="99287"/>
    <lineage>
        <taxon>Bacteria</taxon>
        <taxon>Pseudomonadati</taxon>
        <taxon>Pseudomonadota</taxon>
        <taxon>Gammaproteobacteria</taxon>
        <taxon>Enterobacterales</taxon>
        <taxon>Enterobacteriaceae</taxon>
        <taxon>Salmonella</taxon>
    </lineage>
</organism>
<reference key="1">
    <citation type="journal article" date="1992" name="J. Bacteriol.">
        <title>Molecular and functional characterization of the Salmonella invasion gene invA: homology of InvA to members of a new protein family.</title>
        <authorList>
            <person name="Galan J.E."/>
            <person name="Ginocchio C.C."/>
            <person name="Costeas P."/>
        </authorList>
    </citation>
    <scope>NUCLEOTIDE SEQUENCE [GENOMIC DNA]</scope>
    <source>
        <strain>SR-11</strain>
    </source>
</reference>
<reference key="2">
    <citation type="journal article" date="2001" name="Nature">
        <title>Complete genome sequence of Salmonella enterica serovar Typhimurium LT2.</title>
        <authorList>
            <person name="McClelland M."/>
            <person name="Sanderson K.E."/>
            <person name="Spieth J."/>
            <person name="Clifton S.W."/>
            <person name="Latreille P."/>
            <person name="Courtney L."/>
            <person name="Porwollik S."/>
            <person name="Ali J."/>
            <person name="Dante M."/>
            <person name="Du F."/>
            <person name="Hou S."/>
            <person name="Layman D."/>
            <person name="Leonard S."/>
            <person name="Nguyen C."/>
            <person name="Scott K."/>
            <person name="Holmes A."/>
            <person name="Grewal N."/>
            <person name="Mulvaney E."/>
            <person name="Ryan E."/>
            <person name="Sun H."/>
            <person name="Florea L."/>
            <person name="Miller W."/>
            <person name="Stoneking T."/>
            <person name="Nhan M."/>
            <person name="Waterston R."/>
            <person name="Wilson R.K."/>
        </authorList>
    </citation>
    <scope>NUCLEOTIDE SEQUENCE [LARGE SCALE GENOMIC DNA]</scope>
    <source>
        <strain>LT2 / SGSC1412 / ATCC 700720</strain>
    </source>
</reference>
<reference key="3">
    <citation type="journal article" date="1996" name="Appl. Environ. Microbiol.">
        <title>Molecular genetic relationships of the salmonellae.</title>
        <authorList>
            <person name="Boyd E.F."/>
            <person name="Wang F.-S."/>
            <person name="Whittam T.S."/>
            <person name="Selander R.K."/>
        </authorList>
    </citation>
    <scope>NUCLEOTIDE SEQUENCE [GENOMIC DNA] OF 7-656</scope>
    <source>
        <strain>RKS2985</strain>
        <strain>RKS2993</strain>
        <strain>RKS2995</strain>
        <strain>RKS3013</strain>
        <strain>RKS3014</strain>
        <strain>RKS3015</strain>
        <strain>RKS3057</strain>
        <strain>RKS3333</strain>
        <strain>RKS4194</strain>
    </source>
</reference>
<comment type="function">
    <text>Involved in the invasion of the cells of the intestinal epithelium. Could be involved in the translocation of the InvE protein.</text>
</comment>
<comment type="subcellular location">
    <subcellularLocation>
        <location evidence="2">Cell inner membrane</location>
        <topology evidence="2">Multi-pass membrane protein</topology>
    </subcellularLocation>
</comment>
<comment type="similarity">
    <text evidence="2">Belongs to the FHIPEP (flagella/HR/invasion proteins export pore) family.</text>
</comment>
<accession>P0A1I3</accession>
<accession>P35657</accession>
<accession>Q57033</accession>
<accession>Q57173</accession>
<accession>Q57186</accession>
<accession>Q57531</accession>
<sequence>MLLSLLNSARLRPELLILVLMVMIISMFVIPLPTYLVDFLIALNIVLAILVFMGSFYIDRILSFSTFPAVLLITTLFRLALSISTSRLILIEADAGEIIATFGQFVIGDSLAVGFVVFSIVTVVQFIVITKGSERVAEVAARFSLDGMPGKQMSIDADLKAGIIDADAARERRSVLERESQLYGSFDGAMKFIKGDAIAGIIIIFVNFIGGISVGMTRHGMDLSSALSTYTMLTIGDGLVAQIPALLIAISAGFIVTRVNGDSDNMGRNIMTQLLNNPFVLVVTAILTISMGTLPGFPLPVFVILSVVLSVLFYFKFREAKRSAAKPKTSKGEQPLSIEEKEGSSLGLIGDLDKVSTETVPLILLVPKSRREDLEKAQLAERLRSQFFIDYGVRLPEVLLRDGEGLDDNSIVLLINEIRVEQFTVYFDLMRVVNYSDEVVSFGINPTIHQQGSSQYFWVTHEEGEKLRELGYVLRNALDELYHCLAVTLARNVNEYFGIQETKHMLDQLEAKFPDLLKEVLRHATVQRISEVLQRLLSERVSVRNMKLIMEALALWAPREKDVINLVEHIRGAMARYICHKFANGGELRAVMVSAEVEDVIRKGIRQTSGSTFLSLDPEASANLMDLITLKLDDLLIAHKDLVLLTSVDVRRFIKKMIEGRFPDLEVLSFGEIADSKSVNVIKTI</sequence>
<evidence type="ECO:0000255" key="1"/>
<evidence type="ECO:0000305" key="2"/>
<evidence type="ECO:0007829" key="3">
    <source>
        <dbReference type="PDB" id="2X49"/>
    </source>
</evidence>
<proteinExistence type="evidence at protein level"/>
<feature type="chain" id="PRO_0000190028" description="Invasion protein InvA">
    <location>
        <begin position="1"/>
        <end position="685"/>
    </location>
</feature>
<feature type="transmembrane region" description="Helical" evidence="1">
    <location>
        <begin position="17"/>
        <end position="37"/>
    </location>
</feature>
<feature type="transmembrane region" description="Helical" evidence="1">
    <location>
        <begin position="39"/>
        <end position="59"/>
    </location>
</feature>
<feature type="transmembrane region" description="Helical" evidence="1">
    <location>
        <begin position="61"/>
        <end position="81"/>
    </location>
</feature>
<feature type="transmembrane region" description="Helical" evidence="1">
    <location>
        <begin position="110"/>
        <end position="130"/>
    </location>
</feature>
<feature type="transmembrane region" description="Helical" evidence="1">
    <location>
        <begin position="197"/>
        <end position="217"/>
    </location>
</feature>
<feature type="transmembrane region" description="Helical" evidence="1">
    <location>
        <begin position="235"/>
        <end position="255"/>
    </location>
</feature>
<feature type="transmembrane region" description="Helical" evidence="1">
    <location>
        <begin position="274"/>
        <end position="294"/>
    </location>
</feature>
<feature type="transmembrane region" description="Helical" evidence="1">
    <location>
        <begin position="295"/>
        <end position="315"/>
    </location>
</feature>
<feature type="sequence variant" description="In strain: SR-11, RKS2985, RKS2993, RKS2995, RKS3013, RKS3014, RKS3015, RKS3057, RKS3333 and RKS4194.">
    <original>S</original>
    <variation>T</variation>
    <location>
        <position position="263"/>
    </location>
</feature>
<feature type="sequence variant" description="In strain: RKS3013, RKS3014 and RKS3015.">
    <original>S</original>
    <variation>A</variation>
    <location>
        <position position="306"/>
    </location>
</feature>
<feature type="sequence variant" description="In strain: RKS2985, RKS2993, RKS2995, RKS3013, RKS3014, RKS3015 and RKS3057.">
    <original>S</original>
    <variation>T</variation>
    <location>
        <position position="344"/>
    </location>
</feature>
<feature type="sequence variant" description="In strain: RKS3013, RKS3014 and RKS3015.">
    <original>S</original>
    <variation>N</variation>
    <location>
        <position position="369"/>
    </location>
</feature>
<feature type="sequence variant" description="In strain: RKS2985, RKS2993, RKS2995, RKS3013, RKS3014, RKS3015 and RKS3057.">
    <original>E</original>
    <variation>D</variation>
    <location>
        <position position="381"/>
    </location>
</feature>
<feature type="sequence variant" description="In strain: RKS2995 and RKS3057.">
    <original>E</original>
    <variation>D</variation>
    <location>
        <position position="404"/>
    </location>
</feature>
<feature type="sequence variant" description="In strain: RKS3013, RKS3014 and RKS3015.">
    <original>D</original>
    <variation>S</variation>
    <location>
        <position position="407"/>
    </location>
</feature>
<feature type="sequence variant" description="In strain: RKS2995 and RKS3057.">
    <original>V</original>
    <variation>I</variation>
    <location>
        <position position="412"/>
    </location>
</feature>
<feature type="sequence variant" description="In strain: RKS2985, RKS2993, RKS2995, RKS3013, RKS3014, RKS3015 and RKS3057.">
    <original>V</original>
    <variation>A</variation>
    <location>
        <position position="440"/>
    </location>
</feature>
<feature type="sequence variant" description="In strain: RKS3013, RKS3014 and RKS3015.">
    <original>IHQ</original>
    <variation>TYH</variation>
    <location>
        <begin position="448"/>
        <end position="450"/>
    </location>
</feature>
<feature type="sequence variant" description="In strain: RKS2985, RKS2993, RKS2995 and RKS3057.">
    <original>I</original>
    <variation>T</variation>
    <location>
        <position position="448"/>
    </location>
</feature>
<feature type="sequence variant" description="In strain: RKS3013, RKS3014 and RKS3015.">
    <original>R</original>
    <variation>Q</variation>
    <location>
        <position position="475"/>
    </location>
</feature>
<feature type="sequence variant" description="In strain: SR-11, RKS2985, RKS2993, RKS2995, RKS3057, RKS3333 and RKS4194.">
    <original>L</original>
    <variation>V</variation>
    <location>
        <position position="489"/>
    </location>
</feature>
<feature type="sequence variant" description="In strain: RKS2985 and RKS2993.">
    <original>V</original>
    <variation>I</variation>
    <location>
        <position position="600"/>
    </location>
</feature>
<feature type="sequence variant" description="In strain: RKS3013, RKS3014 and RKS3015.">
    <original>D</original>
    <variation>E</variation>
    <location>
        <position position="617"/>
    </location>
</feature>
<feature type="strand" evidence="3">
    <location>
        <begin position="362"/>
        <end position="366"/>
    </location>
</feature>
<feature type="helix" evidence="3">
    <location>
        <begin position="368"/>
        <end position="370"/>
    </location>
</feature>
<feature type="helix" evidence="3">
    <location>
        <begin position="371"/>
        <end position="376"/>
    </location>
</feature>
<feature type="helix" evidence="3">
    <location>
        <begin position="379"/>
        <end position="391"/>
    </location>
</feature>
<feature type="strand" evidence="3">
    <location>
        <begin position="398"/>
        <end position="402"/>
    </location>
</feature>
<feature type="strand" evidence="3">
    <location>
        <begin position="410"/>
        <end position="415"/>
    </location>
</feature>
<feature type="strand" evidence="3">
    <location>
        <begin position="418"/>
        <end position="424"/>
    </location>
</feature>
<feature type="strand" evidence="3">
    <location>
        <begin position="429"/>
        <end position="432"/>
    </location>
</feature>
<feature type="helix" evidence="3">
    <location>
        <begin position="438"/>
        <end position="441"/>
    </location>
</feature>
<feature type="strand" evidence="3">
    <location>
        <begin position="447"/>
        <end position="451"/>
    </location>
</feature>
<feature type="strand" evidence="3">
    <location>
        <begin position="454"/>
        <end position="459"/>
    </location>
</feature>
<feature type="helix" evidence="3">
    <location>
        <begin position="461"/>
        <end position="468"/>
    </location>
</feature>
<feature type="turn" evidence="3">
    <location>
        <begin position="469"/>
        <end position="471"/>
    </location>
</feature>
<feature type="strand" evidence="3">
    <location>
        <begin position="474"/>
        <end position="476"/>
    </location>
</feature>
<feature type="helix" evidence="3">
    <location>
        <begin position="477"/>
        <end position="491"/>
    </location>
</feature>
<feature type="helix" evidence="3">
    <location>
        <begin position="493"/>
        <end position="495"/>
    </location>
</feature>
<feature type="helix" evidence="3">
    <location>
        <begin position="499"/>
        <end position="510"/>
    </location>
</feature>
<feature type="helix" evidence="3">
    <location>
        <begin position="514"/>
        <end position="521"/>
    </location>
</feature>
<feature type="helix" evidence="3">
    <location>
        <begin position="526"/>
        <end position="537"/>
    </location>
</feature>
<feature type="turn" evidence="3">
    <location>
        <begin position="538"/>
        <end position="540"/>
    </location>
</feature>
<feature type="helix" evidence="3">
    <location>
        <begin position="546"/>
        <end position="556"/>
    </location>
</feature>
<feature type="turn" evidence="3">
    <location>
        <begin position="557"/>
        <end position="559"/>
    </location>
</feature>
<feature type="helix" evidence="3">
    <location>
        <begin position="563"/>
        <end position="573"/>
    </location>
</feature>
<feature type="helix" evidence="3">
    <location>
        <begin position="575"/>
        <end position="583"/>
    </location>
</feature>
<feature type="strand" evidence="3">
    <location>
        <begin position="588"/>
        <end position="593"/>
    </location>
</feature>
<feature type="helix" evidence="3">
    <location>
        <begin position="595"/>
        <end position="604"/>
    </location>
</feature>
<feature type="strand" evidence="3">
    <location>
        <begin position="605"/>
        <end position="607"/>
    </location>
</feature>
<feature type="strand" evidence="3">
    <location>
        <begin position="612"/>
        <end position="614"/>
    </location>
</feature>
<feature type="helix" evidence="3">
    <location>
        <begin position="618"/>
        <end position="632"/>
    </location>
</feature>
<feature type="helix" evidence="3">
    <location>
        <begin position="639"/>
        <end position="641"/>
    </location>
</feature>
<feature type="strand" evidence="3">
    <location>
        <begin position="643"/>
        <end position="646"/>
    </location>
</feature>
<feature type="turn" evidence="3">
    <location>
        <begin position="648"/>
        <end position="650"/>
    </location>
</feature>
<feature type="helix" evidence="3">
    <location>
        <begin position="651"/>
        <end position="658"/>
    </location>
</feature>
<feature type="turn" evidence="3">
    <location>
        <begin position="659"/>
        <end position="661"/>
    </location>
</feature>
<feature type="strand" evidence="3">
    <location>
        <begin position="666"/>
        <end position="669"/>
    </location>
</feature>
<feature type="helix" evidence="3">
    <location>
        <begin position="671"/>
        <end position="673"/>
    </location>
</feature>
<feature type="strand" evidence="3">
    <location>
        <begin position="679"/>
        <end position="685"/>
    </location>
</feature>
<gene>
    <name type="primary">invA</name>
    <name type="ordered locus">STM2896</name>
</gene>